<keyword id="KW-0143">Chaperone</keyword>
<keyword id="KW-0156">Chromatin regulator</keyword>
<keyword id="KW-0217">Developmental protein</keyword>
<keyword id="KW-0278">Fertilization</keyword>
<keyword id="KW-0539">Nucleus</keyword>
<keyword id="KW-1185">Reference proteome</keyword>
<gene>
    <name type="primary">Npm2</name>
</gene>
<proteinExistence type="evidence at transcript level"/>
<dbReference type="EMBL" id="AY262112">
    <property type="protein sequence ID" value="AAP33133.1"/>
    <property type="molecule type" value="mRNA"/>
</dbReference>
<dbReference type="EMBL" id="AK054533">
    <property type="protein sequence ID" value="BAC35815.1"/>
    <property type="molecule type" value="mRNA"/>
</dbReference>
<dbReference type="CCDS" id="CCDS27261.1"/>
<dbReference type="RefSeq" id="NP_001398932.1">
    <property type="nucleotide sequence ID" value="NM_001412003.1"/>
</dbReference>
<dbReference type="RefSeq" id="NP_001398933.1">
    <property type="nucleotide sequence ID" value="NM_001412004.1"/>
</dbReference>
<dbReference type="RefSeq" id="NP_001398934.1">
    <property type="nucleotide sequence ID" value="NM_001412005.1"/>
</dbReference>
<dbReference type="RefSeq" id="NP_851990.2">
    <property type="nucleotide sequence ID" value="NM_181345.4"/>
</dbReference>
<dbReference type="RefSeq" id="XP_006519206.1">
    <property type="nucleotide sequence ID" value="XM_006519143.2"/>
</dbReference>
<dbReference type="RefSeq" id="XP_006519208.1">
    <property type="nucleotide sequence ID" value="XM_006519145.3"/>
</dbReference>
<dbReference type="RefSeq" id="XP_006519209.1">
    <property type="nucleotide sequence ID" value="XM_006519146.3"/>
</dbReference>
<dbReference type="RefSeq" id="XP_006519210.1">
    <property type="nucleotide sequence ID" value="XM_006519147.2"/>
</dbReference>
<dbReference type="RefSeq" id="XP_011243393.1">
    <property type="nucleotide sequence ID" value="XM_011245091.2"/>
</dbReference>
<dbReference type="RefSeq" id="XP_017171550.1">
    <property type="nucleotide sequence ID" value="XM_017316061.1"/>
</dbReference>
<dbReference type="SMR" id="Q80W85"/>
<dbReference type="BioGRID" id="236605">
    <property type="interactions" value="1"/>
</dbReference>
<dbReference type="FunCoup" id="Q80W85">
    <property type="interactions" value="792"/>
</dbReference>
<dbReference type="STRING" id="10090.ENSMUSP00000057365"/>
<dbReference type="iPTMnet" id="Q80W85"/>
<dbReference type="PhosphoSitePlus" id="Q80W85"/>
<dbReference type="REPRODUCTION-2DPAGE" id="Q80W85"/>
<dbReference type="PaxDb" id="10090-ENSMUSP00000057365"/>
<dbReference type="ProteomicsDB" id="293713"/>
<dbReference type="Antibodypedia" id="22452">
    <property type="antibodies" value="87 antibodies from 22 providers"/>
</dbReference>
<dbReference type="DNASU" id="328440"/>
<dbReference type="Ensembl" id="ENSMUST00000062629.5">
    <property type="protein sequence ID" value="ENSMUSP00000057365.5"/>
    <property type="gene ID" value="ENSMUSG00000047911.7"/>
</dbReference>
<dbReference type="GeneID" id="328440"/>
<dbReference type="KEGG" id="mmu:328440"/>
<dbReference type="UCSC" id="uc007uot.2">
    <property type="organism name" value="mouse"/>
</dbReference>
<dbReference type="AGR" id="MGI:1890811"/>
<dbReference type="CTD" id="10361"/>
<dbReference type="MGI" id="MGI:1890811">
    <property type="gene designation" value="Npm2"/>
</dbReference>
<dbReference type="VEuPathDB" id="HostDB:ENSMUSG00000047911"/>
<dbReference type="eggNOG" id="ENOG502S0N8">
    <property type="taxonomic scope" value="Eukaryota"/>
</dbReference>
<dbReference type="GeneTree" id="ENSGT00940000161418"/>
<dbReference type="HOGENOM" id="CLU_058838_2_0_1"/>
<dbReference type="InParanoid" id="Q80W85"/>
<dbReference type="OMA" id="GQECYES"/>
<dbReference type="OrthoDB" id="6075101at2759"/>
<dbReference type="PhylomeDB" id="Q80W85"/>
<dbReference type="TreeFam" id="TF327704"/>
<dbReference type="BioGRID-ORCS" id="328440">
    <property type="hits" value="1 hit in 82 CRISPR screens"/>
</dbReference>
<dbReference type="ChiTaRS" id="Npm2">
    <property type="organism name" value="mouse"/>
</dbReference>
<dbReference type="PRO" id="PR:Q80W85"/>
<dbReference type="Proteomes" id="UP000000589">
    <property type="component" value="Chromosome 14"/>
</dbReference>
<dbReference type="RNAct" id="Q80W85">
    <property type="molecule type" value="protein"/>
</dbReference>
<dbReference type="Bgee" id="ENSMUSG00000047911">
    <property type="expression patterns" value="Expressed in primary oocyte and 72 other cell types or tissues"/>
</dbReference>
<dbReference type="ExpressionAtlas" id="Q80W85">
    <property type="expression patterns" value="baseline and differential"/>
</dbReference>
<dbReference type="GO" id="GO:0000785">
    <property type="term" value="C:chromatin"/>
    <property type="evidence" value="ECO:0000250"/>
    <property type="project" value="UniProtKB"/>
</dbReference>
<dbReference type="GO" id="GO:0005654">
    <property type="term" value="C:nucleoplasm"/>
    <property type="evidence" value="ECO:0000304"/>
    <property type="project" value="Reactome"/>
</dbReference>
<dbReference type="GO" id="GO:0005634">
    <property type="term" value="C:nucleus"/>
    <property type="evidence" value="ECO:0000314"/>
    <property type="project" value="MGI"/>
</dbReference>
<dbReference type="GO" id="GO:0061995">
    <property type="term" value="F:ATP-dependent protein-DNA complex displacement activity"/>
    <property type="evidence" value="ECO:0000304"/>
    <property type="project" value="Reactome"/>
</dbReference>
<dbReference type="GO" id="GO:0003682">
    <property type="term" value="F:chromatin binding"/>
    <property type="evidence" value="ECO:0000314"/>
    <property type="project" value="MGI"/>
</dbReference>
<dbReference type="GO" id="GO:0019899">
    <property type="term" value="F:enzyme binding"/>
    <property type="evidence" value="ECO:0007669"/>
    <property type="project" value="Ensembl"/>
</dbReference>
<dbReference type="GO" id="GO:0042802">
    <property type="term" value="F:identical protein binding"/>
    <property type="evidence" value="ECO:0007669"/>
    <property type="project" value="Ensembl"/>
</dbReference>
<dbReference type="GO" id="GO:0001824">
    <property type="term" value="P:blastocyst development"/>
    <property type="evidence" value="ECO:0000250"/>
    <property type="project" value="UniProtKB"/>
</dbReference>
<dbReference type="GO" id="GO:0006338">
    <property type="term" value="P:chromatin remodeling"/>
    <property type="evidence" value="ECO:0000315"/>
    <property type="project" value="MGI"/>
</dbReference>
<dbReference type="GO" id="GO:0009994">
    <property type="term" value="P:oocyte differentiation"/>
    <property type="evidence" value="ECO:0000250"/>
    <property type="project" value="UniProtKB"/>
</dbReference>
<dbReference type="GO" id="GO:0045740">
    <property type="term" value="P:positive regulation of DNA replication"/>
    <property type="evidence" value="ECO:0007669"/>
    <property type="project" value="Ensembl"/>
</dbReference>
<dbReference type="GO" id="GO:0045836">
    <property type="term" value="P:positive regulation of meiotic nuclear division"/>
    <property type="evidence" value="ECO:0000250"/>
    <property type="project" value="UniProtKB"/>
</dbReference>
<dbReference type="GO" id="GO:0007096">
    <property type="term" value="P:regulation of exit from mitosis"/>
    <property type="evidence" value="ECO:0000250"/>
    <property type="project" value="UniProtKB"/>
</dbReference>
<dbReference type="GO" id="GO:0007338">
    <property type="term" value="P:single fertilization"/>
    <property type="evidence" value="ECO:0000250"/>
    <property type="project" value="UniProtKB"/>
</dbReference>
<dbReference type="FunFam" id="2.60.120.340:FF:000003">
    <property type="entry name" value="Nucleoplasmin 2"/>
    <property type="match status" value="1"/>
</dbReference>
<dbReference type="Gene3D" id="2.60.120.340">
    <property type="entry name" value="Nucleoplasmin core domain"/>
    <property type="match status" value="1"/>
</dbReference>
<dbReference type="InterPro" id="IPR004301">
    <property type="entry name" value="Nucleoplasmin"/>
</dbReference>
<dbReference type="InterPro" id="IPR024057">
    <property type="entry name" value="Nucleoplasmin_core_dom"/>
</dbReference>
<dbReference type="InterPro" id="IPR036824">
    <property type="entry name" value="Nucleoplasmin_core_dom_sf"/>
</dbReference>
<dbReference type="PANTHER" id="PTHR22747">
    <property type="entry name" value="NUCLEOPLASMIN"/>
    <property type="match status" value="1"/>
</dbReference>
<dbReference type="PANTHER" id="PTHR22747:SF14">
    <property type="entry name" value="NUCLEOPLASMIN-2"/>
    <property type="match status" value="1"/>
</dbReference>
<dbReference type="Pfam" id="PF03066">
    <property type="entry name" value="Nucleoplasmin"/>
    <property type="match status" value="1"/>
</dbReference>
<dbReference type="SUPFAM" id="SSF69203">
    <property type="entry name" value="Nucleoplasmin-like core domain"/>
    <property type="match status" value="1"/>
</dbReference>
<accession>Q80W85</accession>
<accession>Q8BW23</accession>
<sequence>MSRHSTSSVTETTAKNMLWGSELNQEKQTCTFRGQGEKKDSCKLLLSTICLGEKAKEEVNRVEVLSQEGRKPPITIATLKASVLPMVTVSGIELSPPVTFRLRTGSGPVFLSGLECYETSDLTWEDDEEEEEEEEEEDEDEDADISLEEIPVKQVKRVAPQKQMSIAKKKKVEKEEDETVVRPSPQDKSPWKKEKSTPRAKKPVTKK</sequence>
<reference key="1">
    <citation type="journal article" date="2003" name="Science">
        <title>Roles of NPM2 in chromatin and nucleolar organization in oocytes and embryos.</title>
        <authorList>
            <person name="Burns K.H."/>
            <person name="Viveiros M.M."/>
            <person name="Ren Y."/>
            <person name="Wang P."/>
            <person name="DeMayo F.J."/>
            <person name="Frail D.E."/>
            <person name="Eppig J.J."/>
            <person name="Matzuk M.M."/>
        </authorList>
    </citation>
    <scope>NUCLEOTIDE SEQUENCE [MRNA]</scope>
    <scope>SUBCELLULAR LOCATION</scope>
    <scope>TISSUE SPECIFICITY</scope>
    <source>
        <strain>129S6/SvEv</strain>
    </source>
</reference>
<reference key="2">
    <citation type="journal article" date="2005" name="Science">
        <title>The transcriptional landscape of the mammalian genome.</title>
        <authorList>
            <person name="Carninci P."/>
            <person name="Kasukawa T."/>
            <person name="Katayama S."/>
            <person name="Gough J."/>
            <person name="Frith M.C."/>
            <person name="Maeda N."/>
            <person name="Oyama R."/>
            <person name="Ravasi T."/>
            <person name="Lenhard B."/>
            <person name="Wells C."/>
            <person name="Kodzius R."/>
            <person name="Shimokawa K."/>
            <person name="Bajic V.B."/>
            <person name="Brenner S.E."/>
            <person name="Batalov S."/>
            <person name="Forrest A.R."/>
            <person name="Zavolan M."/>
            <person name="Davis M.J."/>
            <person name="Wilming L.G."/>
            <person name="Aidinis V."/>
            <person name="Allen J.E."/>
            <person name="Ambesi-Impiombato A."/>
            <person name="Apweiler R."/>
            <person name="Aturaliya R.N."/>
            <person name="Bailey T.L."/>
            <person name="Bansal M."/>
            <person name="Baxter L."/>
            <person name="Beisel K.W."/>
            <person name="Bersano T."/>
            <person name="Bono H."/>
            <person name="Chalk A.M."/>
            <person name="Chiu K.P."/>
            <person name="Choudhary V."/>
            <person name="Christoffels A."/>
            <person name="Clutterbuck D.R."/>
            <person name="Crowe M.L."/>
            <person name="Dalla E."/>
            <person name="Dalrymple B.P."/>
            <person name="de Bono B."/>
            <person name="Della Gatta G."/>
            <person name="di Bernardo D."/>
            <person name="Down T."/>
            <person name="Engstrom P."/>
            <person name="Fagiolini M."/>
            <person name="Faulkner G."/>
            <person name="Fletcher C.F."/>
            <person name="Fukushima T."/>
            <person name="Furuno M."/>
            <person name="Futaki S."/>
            <person name="Gariboldi M."/>
            <person name="Georgii-Hemming P."/>
            <person name="Gingeras T.R."/>
            <person name="Gojobori T."/>
            <person name="Green R.E."/>
            <person name="Gustincich S."/>
            <person name="Harbers M."/>
            <person name="Hayashi Y."/>
            <person name="Hensch T.K."/>
            <person name="Hirokawa N."/>
            <person name="Hill D."/>
            <person name="Huminiecki L."/>
            <person name="Iacono M."/>
            <person name="Ikeo K."/>
            <person name="Iwama A."/>
            <person name="Ishikawa T."/>
            <person name="Jakt M."/>
            <person name="Kanapin A."/>
            <person name="Katoh M."/>
            <person name="Kawasawa Y."/>
            <person name="Kelso J."/>
            <person name="Kitamura H."/>
            <person name="Kitano H."/>
            <person name="Kollias G."/>
            <person name="Krishnan S.P."/>
            <person name="Kruger A."/>
            <person name="Kummerfeld S.K."/>
            <person name="Kurochkin I.V."/>
            <person name="Lareau L.F."/>
            <person name="Lazarevic D."/>
            <person name="Lipovich L."/>
            <person name="Liu J."/>
            <person name="Liuni S."/>
            <person name="McWilliam S."/>
            <person name="Madan Babu M."/>
            <person name="Madera M."/>
            <person name="Marchionni L."/>
            <person name="Matsuda H."/>
            <person name="Matsuzawa S."/>
            <person name="Miki H."/>
            <person name="Mignone F."/>
            <person name="Miyake S."/>
            <person name="Morris K."/>
            <person name="Mottagui-Tabar S."/>
            <person name="Mulder N."/>
            <person name="Nakano N."/>
            <person name="Nakauchi H."/>
            <person name="Ng P."/>
            <person name="Nilsson R."/>
            <person name="Nishiguchi S."/>
            <person name="Nishikawa S."/>
            <person name="Nori F."/>
            <person name="Ohara O."/>
            <person name="Okazaki Y."/>
            <person name="Orlando V."/>
            <person name="Pang K.C."/>
            <person name="Pavan W.J."/>
            <person name="Pavesi G."/>
            <person name="Pesole G."/>
            <person name="Petrovsky N."/>
            <person name="Piazza S."/>
            <person name="Reed J."/>
            <person name="Reid J.F."/>
            <person name="Ring B.Z."/>
            <person name="Ringwald M."/>
            <person name="Rost B."/>
            <person name="Ruan Y."/>
            <person name="Salzberg S.L."/>
            <person name="Sandelin A."/>
            <person name="Schneider C."/>
            <person name="Schoenbach C."/>
            <person name="Sekiguchi K."/>
            <person name="Semple C.A."/>
            <person name="Seno S."/>
            <person name="Sessa L."/>
            <person name="Sheng Y."/>
            <person name="Shibata Y."/>
            <person name="Shimada H."/>
            <person name="Shimada K."/>
            <person name="Silva D."/>
            <person name="Sinclair B."/>
            <person name="Sperling S."/>
            <person name="Stupka E."/>
            <person name="Sugiura K."/>
            <person name="Sultana R."/>
            <person name="Takenaka Y."/>
            <person name="Taki K."/>
            <person name="Tammoja K."/>
            <person name="Tan S.L."/>
            <person name="Tang S."/>
            <person name="Taylor M.S."/>
            <person name="Tegner J."/>
            <person name="Teichmann S.A."/>
            <person name="Ueda H.R."/>
            <person name="van Nimwegen E."/>
            <person name="Verardo R."/>
            <person name="Wei C.L."/>
            <person name="Yagi K."/>
            <person name="Yamanishi H."/>
            <person name="Zabarovsky E."/>
            <person name="Zhu S."/>
            <person name="Zimmer A."/>
            <person name="Hide W."/>
            <person name="Bult C."/>
            <person name="Grimmond S.M."/>
            <person name="Teasdale R.D."/>
            <person name="Liu E.T."/>
            <person name="Brusic V."/>
            <person name="Quackenbush J."/>
            <person name="Wahlestedt C."/>
            <person name="Mattick J.S."/>
            <person name="Hume D.A."/>
            <person name="Kai C."/>
            <person name="Sasaki D."/>
            <person name="Tomaru Y."/>
            <person name="Fukuda S."/>
            <person name="Kanamori-Katayama M."/>
            <person name="Suzuki M."/>
            <person name="Aoki J."/>
            <person name="Arakawa T."/>
            <person name="Iida J."/>
            <person name="Imamura K."/>
            <person name="Itoh M."/>
            <person name="Kato T."/>
            <person name="Kawaji H."/>
            <person name="Kawagashira N."/>
            <person name="Kawashima T."/>
            <person name="Kojima M."/>
            <person name="Kondo S."/>
            <person name="Konno H."/>
            <person name="Nakano K."/>
            <person name="Ninomiya N."/>
            <person name="Nishio T."/>
            <person name="Okada M."/>
            <person name="Plessy C."/>
            <person name="Shibata K."/>
            <person name="Shiraki T."/>
            <person name="Suzuki S."/>
            <person name="Tagami M."/>
            <person name="Waki K."/>
            <person name="Watahiki A."/>
            <person name="Okamura-Oho Y."/>
            <person name="Suzuki H."/>
            <person name="Kawai J."/>
            <person name="Hayashizaki Y."/>
        </authorList>
    </citation>
    <scope>NUCLEOTIDE SEQUENCE [LARGE SCALE MRNA]</scope>
    <source>
        <strain>C57BL/6J</strain>
        <tissue>Ovary</tissue>
    </source>
</reference>
<comment type="function">
    <text>Core histones chaperone involved in chromatin reprogramming, specially during fertilization and early embryonic development. Probably involved in sperm DNA decondensation during fertilization.</text>
</comment>
<comment type="subunit">
    <text evidence="1">Homopentamer, when bound to H2A-H2B dimers only. Homodecamer of two stacked pentamers, when bound to H2A-H2B dimers and H3-H4 tetramers simultaneously (By similarity).</text>
</comment>
<comment type="subcellular location">
    <subcellularLocation>
        <location evidence="3">Nucleus</location>
    </subcellularLocation>
    <text>Found in the oocyte nucleus before nuclear membrane breakdown, after which it is redistributed to the cytoplasm.</text>
</comment>
<comment type="tissue specificity">
    <text evidence="3">Ovary specific.</text>
</comment>
<comment type="domain">
    <text evidence="1">The acidic tract A2 mediates histone binding.</text>
</comment>
<comment type="similarity">
    <text evidence="4">Belongs to the nucleoplasmin family.</text>
</comment>
<organism>
    <name type="scientific">Mus musculus</name>
    <name type="common">Mouse</name>
    <dbReference type="NCBI Taxonomy" id="10090"/>
    <lineage>
        <taxon>Eukaryota</taxon>
        <taxon>Metazoa</taxon>
        <taxon>Chordata</taxon>
        <taxon>Craniata</taxon>
        <taxon>Vertebrata</taxon>
        <taxon>Euteleostomi</taxon>
        <taxon>Mammalia</taxon>
        <taxon>Eutheria</taxon>
        <taxon>Euarchontoglires</taxon>
        <taxon>Glires</taxon>
        <taxon>Rodentia</taxon>
        <taxon>Myomorpha</taxon>
        <taxon>Muroidea</taxon>
        <taxon>Muridae</taxon>
        <taxon>Murinae</taxon>
        <taxon>Mus</taxon>
        <taxon>Mus</taxon>
    </lineage>
</organism>
<name>NPM2_MOUSE</name>
<feature type="chain" id="PRO_0000219488" description="Nucleoplasmin-2">
    <location>
        <begin position="1"/>
        <end position="207"/>
    </location>
</feature>
<feature type="region of interest" description="Disordered" evidence="2">
    <location>
        <begin position="1"/>
        <end position="20"/>
    </location>
</feature>
<feature type="region of interest" description="Disordered" evidence="2">
    <location>
        <begin position="121"/>
        <end position="207"/>
    </location>
</feature>
<feature type="region of interest" description="Acidic tract A2" evidence="1">
    <location>
        <begin position="129"/>
        <end position="152"/>
    </location>
</feature>
<feature type="short sequence motif" description="Bipartite nuclear localization signal" evidence="1">
    <location>
        <begin position="165"/>
        <end position="180"/>
    </location>
</feature>
<feature type="compositionally biased region" description="Polar residues" evidence="2">
    <location>
        <begin position="1"/>
        <end position="15"/>
    </location>
</feature>
<feature type="compositionally biased region" description="Acidic residues" evidence="2">
    <location>
        <begin position="123"/>
        <end position="147"/>
    </location>
</feature>
<feature type="compositionally biased region" description="Basic residues" evidence="2">
    <location>
        <begin position="198"/>
        <end position="207"/>
    </location>
</feature>
<feature type="site" description="Interaction between pentamers" evidence="1">
    <location>
        <position position="57"/>
    </location>
</feature>
<feature type="site" description="Interaction between pentamers" evidence="1">
    <location>
        <position position="84"/>
    </location>
</feature>
<feature type="sequence conflict" description="In Ref. 2; BAC35815." evidence="4" ref="2">
    <original>S</original>
    <variation>F</variation>
    <location>
        <position position="196"/>
    </location>
</feature>
<protein>
    <recommendedName>
        <fullName>Nucleoplasmin-2</fullName>
    </recommendedName>
</protein>
<evidence type="ECO:0000250" key="1"/>
<evidence type="ECO:0000256" key="2">
    <source>
        <dbReference type="SAM" id="MobiDB-lite"/>
    </source>
</evidence>
<evidence type="ECO:0000269" key="3">
    <source>
    </source>
</evidence>
<evidence type="ECO:0000305" key="4"/>